<evidence type="ECO:0000250" key="1"/>
<evidence type="ECO:0000250" key="2">
    <source>
        <dbReference type="UniProtKB" id="P02994"/>
    </source>
</evidence>
<evidence type="ECO:0000305" key="3"/>
<reference key="1">
    <citation type="journal article" date="1994" name="J. Mol. Biol.">
        <title>Increased longevity of EF-1 alpha high-fidelity mutants in Podospora anserina.</title>
        <authorList>
            <person name="Silar P."/>
            <person name="Picard M."/>
        </authorList>
    </citation>
    <scope>NUCLEOTIDE SEQUENCE [GENOMIC DNA]</scope>
    <source>
        <strain>s</strain>
    </source>
</reference>
<gene>
    <name type="primary">TEF</name>
    <name type="synonym">AS4</name>
</gene>
<accession>Q01520</accession>
<proteinExistence type="inferred from homology"/>
<protein>
    <recommendedName>
        <fullName>Elongation factor 1-alpha</fullName>
        <shortName>EF-1-alpha</shortName>
    </recommendedName>
</protein>
<feature type="initiator methionine" description="Removed" evidence="2">
    <location>
        <position position="1"/>
    </location>
</feature>
<feature type="chain" id="PRO_0000090960" description="Elongation factor 1-alpha">
    <location>
        <begin position="2"/>
        <end position="460"/>
    </location>
</feature>
<feature type="domain" description="tr-type G">
    <location>
        <begin position="6"/>
        <end position="241"/>
    </location>
</feature>
<feature type="region of interest" description="G1" evidence="1">
    <location>
        <begin position="15"/>
        <end position="22"/>
    </location>
</feature>
<feature type="region of interest" description="G2" evidence="1">
    <location>
        <begin position="71"/>
        <end position="75"/>
    </location>
</feature>
<feature type="region of interest" description="G3" evidence="1">
    <location>
        <begin position="92"/>
        <end position="95"/>
    </location>
</feature>
<feature type="region of interest" description="G4" evidence="1">
    <location>
        <begin position="154"/>
        <end position="157"/>
    </location>
</feature>
<feature type="region of interest" description="G5" evidence="1">
    <location>
        <begin position="193"/>
        <end position="195"/>
    </location>
</feature>
<feature type="binding site" evidence="1">
    <location>
        <begin position="15"/>
        <end position="22"/>
    </location>
    <ligand>
        <name>GTP</name>
        <dbReference type="ChEBI" id="CHEBI:37565"/>
    </ligand>
</feature>
<feature type="binding site" evidence="1">
    <location>
        <begin position="92"/>
        <end position="96"/>
    </location>
    <ligand>
        <name>GTP</name>
        <dbReference type="ChEBI" id="CHEBI:37565"/>
    </ligand>
</feature>
<feature type="binding site" evidence="1">
    <location>
        <begin position="154"/>
        <end position="157"/>
    </location>
    <ligand>
        <name>GTP</name>
        <dbReference type="ChEBI" id="CHEBI:37565"/>
    </ligand>
</feature>
<feature type="modified residue" description="N,N,N-trimethylglycine" evidence="2">
    <location>
        <position position="2"/>
    </location>
</feature>
<feature type="modified residue" description="N6,N6-dimethyllysine; alternate" evidence="2">
    <location>
        <position position="3"/>
    </location>
</feature>
<feature type="modified residue" description="N6-methyllysine; alternate" evidence="2">
    <location>
        <position position="3"/>
    </location>
</feature>
<feature type="modified residue" description="N6-methyllysine" evidence="2">
    <location>
        <position position="31"/>
    </location>
</feature>
<feature type="modified residue" description="N6,N6,N6-trimethyllysine" evidence="2">
    <location>
        <position position="80"/>
    </location>
</feature>
<feature type="modified residue" description="N6,N6-dimethyllysine; alternate" evidence="2">
    <location>
        <position position="317"/>
    </location>
</feature>
<feature type="modified residue" description="N6-methyllysine; alternate" evidence="2">
    <location>
        <position position="317"/>
    </location>
</feature>
<feature type="modified residue" description="N6-methyllysine" evidence="2">
    <location>
        <position position="391"/>
    </location>
</feature>
<comment type="function">
    <text>This protein promotes the GTP-dependent binding of aminoacyl-tRNA to the A-site of ribosomes during protein biosynthesis.</text>
</comment>
<comment type="subcellular location">
    <subcellularLocation>
        <location>Cytoplasm</location>
    </subcellularLocation>
</comment>
<comment type="similarity">
    <text evidence="3">Belongs to the TRAFAC class translation factor GTPase superfamily. Classic translation factor GTPase family. EF-Tu/EF-1A subfamily.</text>
</comment>
<keyword id="KW-0963">Cytoplasm</keyword>
<keyword id="KW-0251">Elongation factor</keyword>
<keyword id="KW-0342">GTP-binding</keyword>
<keyword id="KW-0488">Methylation</keyword>
<keyword id="KW-0547">Nucleotide-binding</keyword>
<keyword id="KW-0648">Protein biosynthesis</keyword>
<organism>
    <name type="scientific">Podospora anserina</name>
    <name type="common">Pleurage anserina</name>
    <dbReference type="NCBI Taxonomy" id="2587412"/>
    <lineage>
        <taxon>Eukaryota</taxon>
        <taxon>Fungi</taxon>
        <taxon>Dikarya</taxon>
        <taxon>Ascomycota</taxon>
        <taxon>Pezizomycotina</taxon>
        <taxon>Sordariomycetes</taxon>
        <taxon>Sordariomycetidae</taxon>
        <taxon>Sordariales</taxon>
        <taxon>Podosporaceae</taxon>
        <taxon>Podospora</taxon>
    </lineage>
</organism>
<sequence>MGKEDKTHINVVVIGHVDSGKSTTTGHLIYKCGGIDKRTIEKFEKEAAELGKGSFKYAWVLDKLKAERERGITIDIALWKFETPKYYVTVIDAPGHRDFIKNMITGTSQADCAILIIAAGTGEFEAGISKDGQTREHALLAYTLGVKQLIVAINKMDTTKWSEARFNEIIKETSNFIKKVGYNPKTVAFVPISGFNGDNMLEASTNCPWYKGWEKEVKGGKATGKTLLEAIDSIEPPKRPTDKPLRLPLQDVYKIGGIGTVPVGRIETGILKPGMVVTFAPSNVTTEVKSVEMHHEQLAEGVPGDNVGFNVKNVSVKEIRRGNVAGDSKNDPPMGAASFDAQVIVLNHPGQVGAGYAPVLDCHTAHIACKFSELLQKIDRRTGKAVEESPKFIKSGDAAIVKMVPSKPMCVEAFTEYPPLGRFAVRDMRQTVAVGVIKKVEKAAAGSGKVTKSAAKAGKK</sequence>
<name>EF1A_PODAS</name>
<dbReference type="EMBL" id="X74799">
    <property type="protein sequence ID" value="CAA52806.1"/>
    <property type="molecule type" value="Genomic_DNA"/>
</dbReference>
<dbReference type="PIR" id="S43861">
    <property type="entry name" value="S43861"/>
</dbReference>
<dbReference type="SMR" id="Q01520"/>
<dbReference type="VEuPathDB" id="FungiDB:PODANS_1_19720"/>
<dbReference type="GO" id="GO:0005737">
    <property type="term" value="C:cytoplasm"/>
    <property type="evidence" value="ECO:0007669"/>
    <property type="project" value="UniProtKB-SubCell"/>
</dbReference>
<dbReference type="GO" id="GO:0005525">
    <property type="term" value="F:GTP binding"/>
    <property type="evidence" value="ECO:0007669"/>
    <property type="project" value="UniProtKB-KW"/>
</dbReference>
<dbReference type="GO" id="GO:0003924">
    <property type="term" value="F:GTPase activity"/>
    <property type="evidence" value="ECO:0007669"/>
    <property type="project" value="InterPro"/>
</dbReference>
<dbReference type="GO" id="GO:0003746">
    <property type="term" value="F:translation elongation factor activity"/>
    <property type="evidence" value="ECO:0007669"/>
    <property type="project" value="UniProtKB-KW"/>
</dbReference>
<dbReference type="CDD" id="cd01883">
    <property type="entry name" value="EF1_alpha"/>
    <property type="match status" value="1"/>
</dbReference>
<dbReference type="CDD" id="cd03693">
    <property type="entry name" value="EF1_alpha_II"/>
    <property type="match status" value="1"/>
</dbReference>
<dbReference type="CDD" id="cd03705">
    <property type="entry name" value="EF1_alpha_III"/>
    <property type="match status" value="1"/>
</dbReference>
<dbReference type="FunFam" id="2.40.30.10:FF:000003">
    <property type="entry name" value="Elongation factor 1-alpha"/>
    <property type="match status" value="1"/>
</dbReference>
<dbReference type="FunFam" id="2.40.30.10:FF:000005">
    <property type="entry name" value="Elongation factor 1-alpha"/>
    <property type="match status" value="1"/>
</dbReference>
<dbReference type="FunFam" id="3.40.50.300:FF:000211">
    <property type="entry name" value="Elongation factor 1-alpha"/>
    <property type="match status" value="1"/>
</dbReference>
<dbReference type="Gene3D" id="3.40.50.300">
    <property type="entry name" value="P-loop containing nucleotide triphosphate hydrolases"/>
    <property type="match status" value="1"/>
</dbReference>
<dbReference type="Gene3D" id="2.40.30.10">
    <property type="entry name" value="Translation factors"/>
    <property type="match status" value="2"/>
</dbReference>
<dbReference type="HAMAP" id="MF_00118_A">
    <property type="entry name" value="EF_Tu_A"/>
    <property type="match status" value="1"/>
</dbReference>
<dbReference type="InterPro" id="IPR004161">
    <property type="entry name" value="EFTu-like_2"/>
</dbReference>
<dbReference type="InterPro" id="IPR031157">
    <property type="entry name" value="G_TR_CS"/>
</dbReference>
<dbReference type="InterPro" id="IPR054696">
    <property type="entry name" value="GTP-eEF1A_C"/>
</dbReference>
<dbReference type="InterPro" id="IPR027417">
    <property type="entry name" value="P-loop_NTPase"/>
</dbReference>
<dbReference type="InterPro" id="IPR000795">
    <property type="entry name" value="T_Tr_GTP-bd_dom"/>
</dbReference>
<dbReference type="InterPro" id="IPR050100">
    <property type="entry name" value="TRAFAC_GTPase_members"/>
</dbReference>
<dbReference type="InterPro" id="IPR009000">
    <property type="entry name" value="Transl_B-barrel_sf"/>
</dbReference>
<dbReference type="InterPro" id="IPR009001">
    <property type="entry name" value="Transl_elong_EF1A/Init_IF2_C"/>
</dbReference>
<dbReference type="InterPro" id="IPR004539">
    <property type="entry name" value="Transl_elong_EF1A_euk/arc"/>
</dbReference>
<dbReference type="NCBIfam" id="TIGR00483">
    <property type="entry name" value="EF-1_alpha"/>
    <property type="match status" value="1"/>
</dbReference>
<dbReference type="NCBIfam" id="NF008969">
    <property type="entry name" value="PRK12317.1"/>
    <property type="match status" value="1"/>
</dbReference>
<dbReference type="PANTHER" id="PTHR23115">
    <property type="entry name" value="TRANSLATION FACTOR"/>
    <property type="match status" value="1"/>
</dbReference>
<dbReference type="Pfam" id="PF22594">
    <property type="entry name" value="GTP-eEF1A_C"/>
    <property type="match status" value="1"/>
</dbReference>
<dbReference type="Pfam" id="PF00009">
    <property type="entry name" value="GTP_EFTU"/>
    <property type="match status" value="1"/>
</dbReference>
<dbReference type="Pfam" id="PF03144">
    <property type="entry name" value="GTP_EFTU_D2"/>
    <property type="match status" value="1"/>
</dbReference>
<dbReference type="PRINTS" id="PR00315">
    <property type="entry name" value="ELONGATNFCT"/>
</dbReference>
<dbReference type="SUPFAM" id="SSF50465">
    <property type="entry name" value="EF-Tu/eEF-1alpha/eIF2-gamma C-terminal domain"/>
    <property type="match status" value="1"/>
</dbReference>
<dbReference type="SUPFAM" id="SSF52540">
    <property type="entry name" value="P-loop containing nucleoside triphosphate hydrolases"/>
    <property type="match status" value="1"/>
</dbReference>
<dbReference type="SUPFAM" id="SSF50447">
    <property type="entry name" value="Translation proteins"/>
    <property type="match status" value="1"/>
</dbReference>
<dbReference type="PROSITE" id="PS00301">
    <property type="entry name" value="G_TR_1"/>
    <property type="match status" value="1"/>
</dbReference>
<dbReference type="PROSITE" id="PS51722">
    <property type="entry name" value="G_TR_2"/>
    <property type="match status" value="1"/>
</dbReference>